<accession>A1C874</accession>
<keyword id="KW-0963">Cytoplasm</keyword>
<keyword id="KW-0223">Dioxygenase</keyword>
<keyword id="KW-0408">Iron</keyword>
<keyword id="KW-0479">Metal-binding</keyword>
<keyword id="KW-0560">Oxidoreductase</keyword>
<keyword id="KW-0662">Pyridine nucleotide biosynthesis</keyword>
<keyword id="KW-1185">Reference proteome</keyword>
<sequence length="191" mass="22148">MNPMPLSPLFFATWLAENEDQLRPPVNNYCLYQGNDFILMAVGGPNERNDYHVNETEVCLQPSWCSREANEQEWFYQVKGDMLLRVVENNAFRDIPIKEGEMFLLPGNTPHNPVRFKDTIGLVMERQRPAGSRDRLRWYCTKGDHASPTIIREEVFHCSDLGTQLKPIIEQWQQDEDGRRCAECSCIADPK</sequence>
<evidence type="ECO:0000255" key="1">
    <source>
        <dbReference type="HAMAP-Rule" id="MF_03019"/>
    </source>
</evidence>
<evidence type="ECO:0000305" key="2"/>
<feature type="chain" id="PRO_0000361975" description="3-hydroxyanthranilate 3,4-dioxygenase 2">
    <location>
        <begin position="1"/>
        <end position="191"/>
    </location>
</feature>
<feature type="binding site" evidence="1">
    <location>
        <position position="48"/>
    </location>
    <ligand>
        <name>O2</name>
        <dbReference type="ChEBI" id="CHEBI:15379"/>
    </ligand>
</feature>
<feature type="binding site" evidence="1">
    <location>
        <position position="52"/>
    </location>
    <ligand>
        <name>Fe cation</name>
        <dbReference type="ChEBI" id="CHEBI:24875"/>
        <note>catalytic</note>
    </ligand>
</feature>
<feature type="binding site" evidence="1">
    <location>
        <position position="73"/>
    </location>
    <ligand>
        <name>Fe cation</name>
        <dbReference type="ChEBI" id="CHEBI:24875"/>
        <note>catalytic</note>
    </ligand>
</feature>
<feature type="binding site" evidence="1">
    <location>
        <position position="73"/>
    </location>
    <ligand>
        <name>substrate</name>
    </ligand>
</feature>
<feature type="binding site" evidence="1">
    <location>
        <position position="111"/>
    </location>
    <ligand>
        <name>Fe cation</name>
        <dbReference type="ChEBI" id="CHEBI:24875"/>
        <note>catalytic</note>
    </ligand>
</feature>
<feature type="binding site" evidence="1">
    <location>
        <position position="115"/>
    </location>
    <ligand>
        <name>substrate</name>
    </ligand>
</feature>
<feature type="binding site" evidence="1">
    <location>
        <position position="125"/>
    </location>
    <ligand>
        <name>substrate</name>
    </ligand>
</feature>
<dbReference type="EC" id="1.13.11.6" evidence="1"/>
<dbReference type="EMBL" id="DS027045">
    <property type="protein sequence ID" value="EAW14595.1"/>
    <property type="status" value="ALT_SEQ"/>
    <property type="molecule type" value="Genomic_DNA"/>
</dbReference>
<dbReference type="RefSeq" id="XP_001276021.1">
    <property type="nucleotide sequence ID" value="XM_001276020.1"/>
</dbReference>
<dbReference type="SMR" id="A1C874"/>
<dbReference type="STRING" id="344612.A1C874"/>
<dbReference type="GeneID" id="4708052"/>
<dbReference type="KEGG" id="act:ACLA_076350"/>
<dbReference type="eggNOG" id="KOG3995">
    <property type="taxonomic scope" value="Eukaryota"/>
</dbReference>
<dbReference type="OrthoDB" id="204928at2759"/>
<dbReference type="UniPathway" id="UPA00253">
    <property type="reaction ID" value="UER00330"/>
</dbReference>
<dbReference type="Proteomes" id="UP000006701">
    <property type="component" value="Unassembled WGS sequence"/>
</dbReference>
<dbReference type="GO" id="GO:0005737">
    <property type="term" value="C:cytoplasm"/>
    <property type="evidence" value="ECO:0007669"/>
    <property type="project" value="UniProtKB-SubCell"/>
</dbReference>
<dbReference type="GO" id="GO:0000334">
    <property type="term" value="F:3-hydroxyanthranilate 3,4-dioxygenase activity"/>
    <property type="evidence" value="ECO:0007669"/>
    <property type="project" value="UniProtKB-UniRule"/>
</dbReference>
<dbReference type="GO" id="GO:0008198">
    <property type="term" value="F:ferrous iron binding"/>
    <property type="evidence" value="ECO:0007669"/>
    <property type="project" value="UniProtKB-UniRule"/>
</dbReference>
<dbReference type="GO" id="GO:0034354">
    <property type="term" value="P:'de novo' NAD biosynthetic process from L-tryptophan"/>
    <property type="evidence" value="ECO:0007669"/>
    <property type="project" value="UniProtKB-UniRule"/>
</dbReference>
<dbReference type="GO" id="GO:0043420">
    <property type="term" value="P:anthranilate metabolic process"/>
    <property type="evidence" value="ECO:0007669"/>
    <property type="project" value="UniProtKB-UniRule"/>
</dbReference>
<dbReference type="GO" id="GO:0006569">
    <property type="term" value="P:L-tryptophan catabolic process"/>
    <property type="evidence" value="ECO:0007669"/>
    <property type="project" value="UniProtKB-UniRule"/>
</dbReference>
<dbReference type="GO" id="GO:0019805">
    <property type="term" value="P:quinolinate biosynthetic process"/>
    <property type="evidence" value="ECO:0007669"/>
    <property type="project" value="UniProtKB-UniRule"/>
</dbReference>
<dbReference type="CDD" id="cd06123">
    <property type="entry name" value="cupin_HAO"/>
    <property type="match status" value="1"/>
</dbReference>
<dbReference type="FunFam" id="2.60.120.10:FF:000131">
    <property type="entry name" value="3-hydroxyanthranilate 3,4-dioxygenase"/>
    <property type="match status" value="1"/>
</dbReference>
<dbReference type="Gene3D" id="2.60.120.10">
    <property type="entry name" value="Jelly Rolls"/>
    <property type="match status" value="1"/>
</dbReference>
<dbReference type="HAMAP" id="MF_00825">
    <property type="entry name" value="3_HAO"/>
    <property type="match status" value="1"/>
</dbReference>
<dbReference type="InterPro" id="IPR010329">
    <property type="entry name" value="3hydroanth_dOase"/>
</dbReference>
<dbReference type="InterPro" id="IPR014710">
    <property type="entry name" value="RmlC-like_jellyroll"/>
</dbReference>
<dbReference type="InterPro" id="IPR011051">
    <property type="entry name" value="RmlC_Cupin_sf"/>
</dbReference>
<dbReference type="PANTHER" id="PTHR15497">
    <property type="entry name" value="3-HYDROXYANTHRANILATE 3,4-DIOXYGENASE"/>
    <property type="match status" value="1"/>
</dbReference>
<dbReference type="PANTHER" id="PTHR15497:SF3">
    <property type="entry name" value="3-HYDROXYANTHRANILATE 3,4-DIOXYGENASE 2"/>
    <property type="match status" value="1"/>
</dbReference>
<dbReference type="Pfam" id="PF06052">
    <property type="entry name" value="3-HAO"/>
    <property type="match status" value="2"/>
</dbReference>
<dbReference type="SUPFAM" id="SSF51182">
    <property type="entry name" value="RmlC-like cupins"/>
    <property type="match status" value="1"/>
</dbReference>
<protein>
    <recommendedName>
        <fullName evidence="1">3-hydroxyanthranilate 3,4-dioxygenase 2</fullName>
        <ecNumber evidence="1">1.13.11.6</ecNumber>
    </recommendedName>
    <alternativeName>
        <fullName evidence="1">3-hydroxyanthranilate oxygenase 2</fullName>
        <shortName evidence="1">3-HAO-2</shortName>
    </alternativeName>
    <alternativeName>
        <fullName evidence="1">3-hydroxyanthranilic acid dioxygenase 2</fullName>
        <shortName evidence="1">HAD-2</shortName>
    </alternativeName>
    <alternativeName>
        <fullName evidence="1">Biosynthesis of nicotinic acid protein 1-2</fullName>
    </alternativeName>
</protein>
<reference key="1">
    <citation type="journal article" date="2008" name="PLoS Genet.">
        <title>Genomic islands in the pathogenic filamentous fungus Aspergillus fumigatus.</title>
        <authorList>
            <person name="Fedorova N.D."/>
            <person name="Khaldi N."/>
            <person name="Joardar V.S."/>
            <person name="Maiti R."/>
            <person name="Amedeo P."/>
            <person name="Anderson M.J."/>
            <person name="Crabtree J."/>
            <person name="Silva J.C."/>
            <person name="Badger J.H."/>
            <person name="Albarraq A."/>
            <person name="Angiuoli S."/>
            <person name="Bussey H."/>
            <person name="Bowyer P."/>
            <person name="Cotty P.J."/>
            <person name="Dyer P.S."/>
            <person name="Egan A."/>
            <person name="Galens K."/>
            <person name="Fraser-Liggett C.M."/>
            <person name="Haas B.J."/>
            <person name="Inman J.M."/>
            <person name="Kent R."/>
            <person name="Lemieux S."/>
            <person name="Malavazi I."/>
            <person name="Orvis J."/>
            <person name="Roemer T."/>
            <person name="Ronning C.M."/>
            <person name="Sundaram J.P."/>
            <person name="Sutton G."/>
            <person name="Turner G."/>
            <person name="Venter J.C."/>
            <person name="White O.R."/>
            <person name="Whitty B.R."/>
            <person name="Youngman P."/>
            <person name="Wolfe K.H."/>
            <person name="Goldman G.H."/>
            <person name="Wortman J.R."/>
            <person name="Jiang B."/>
            <person name="Denning D.W."/>
            <person name="Nierman W.C."/>
        </authorList>
    </citation>
    <scope>NUCLEOTIDE SEQUENCE [LARGE SCALE GENOMIC DNA]</scope>
    <source>
        <strain>ATCC 1007 / CBS 513.65 / DSM 816 / NCTC 3887 / NRRL 1 / QM 1276 / 107</strain>
    </source>
</reference>
<comment type="function">
    <text evidence="1">Catalyzes the oxidative ring opening of 3-hydroxyanthranilate to 2-amino-3-carboxymuconate semialdehyde, which spontaneously cyclizes to quinolinate.</text>
</comment>
<comment type="catalytic activity">
    <reaction evidence="1">
        <text>3-hydroxyanthranilate + O2 = (2Z,4Z)-2-amino-3-carboxymuconate 6-semialdehyde</text>
        <dbReference type="Rhea" id="RHEA:17953"/>
        <dbReference type="ChEBI" id="CHEBI:15379"/>
        <dbReference type="ChEBI" id="CHEBI:36559"/>
        <dbReference type="ChEBI" id="CHEBI:77612"/>
        <dbReference type="EC" id="1.13.11.6"/>
    </reaction>
</comment>
<comment type="cofactor">
    <cofactor evidence="1">
        <name>Fe(2+)</name>
        <dbReference type="ChEBI" id="CHEBI:29033"/>
    </cofactor>
</comment>
<comment type="pathway">
    <text evidence="1">Cofactor biosynthesis; NAD(+) biosynthesis; quinolinate from L-kynurenine: step 3/3.</text>
</comment>
<comment type="subcellular location">
    <subcellularLocation>
        <location evidence="1">Cytoplasm</location>
    </subcellularLocation>
</comment>
<comment type="similarity">
    <text evidence="1">Belongs to the 3-HAO family.</text>
</comment>
<comment type="sequence caution" evidence="2">
    <conflict type="erroneous gene model prediction">
        <sequence resource="EMBL-CDS" id="EAW14595"/>
    </conflict>
</comment>
<name>3HAO2_ASPCL</name>
<organism>
    <name type="scientific">Aspergillus clavatus (strain ATCC 1007 / CBS 513.65 / DSM 816 / NCTC 3887 / NRRL 1 / QM 1276 / 107)</name>
    <dbReference type="NCBI Taxonomy" id="344612"/>
    <lineage>
        <taxon>Eukaryota</taxon>
        <taxon>Fungi</taxon>
        <taxon>Dikarya</taxon>
        <taxon>Ascomycota</taxon>
        <taxon>Pezizomycotina</taxon>
        <taxon>Eurotiomycetes</taxon>
        <taxon>Eurotiomycetidae</taxon>
        <taxon>Eurotiales</taxon>
        <taxon>Aspergillaceae</taxon>
        <taxon>Aspergillus</taxon>
        <taxon>Aspergillus subgen. Fumigati</taxon>
    </lineage>
</organism>
<proteinExistence type="inferred from homology"/>
<gene>
    <name type="primary">bna1-2</name>
    <name type="ORF">ACLA_076350</name>
</gene>